<evidence type="ECO:0000255" key="1">
    <source>
        <dbReference type="HAMAP-Rule" id="MF_00514"/>
    </source>
</evidence>
<evidence type="ECO:0000305" key="2"/>
<comment type="similarity">
    <text evidence="1">Belongs to the bacterial ribosomal protein bL35 family.</text>
</comment>
<protein>
    <recommendedName>
        <fullName evidence="1">Large ribosomal subunit protein bL35</fullName>
    </recommendedName>
    <alternativeName>
        <fullName evidence="2">50S ribosomal protein L35</fullName>
    </alternativeName>
</protein>
<accession>B1YP15</accession>
<name>RL35_BURA4</name>
<organism>
    <name type="scientific">Burkholderia ambifaria (strain MC40-6)</name>
    <dbReference type="NCBI Taxonomy" id="398577"/>
    <lineage>
        <taxon>Bacteria</taxon>
        <taxon>Pseudomonadati</taxon>
        <taxon>Pseudomonadota</taxon>
        <taxon>Betaproteobacteria</taxon>
        <taxon>Burkholderiales</taxon>
        <taxon>Burkholderiaceae</taxon>
        <taxon>Burkholderia</taxon>
        <taxon>Burkholderia cepacia complex</taxon>
    </lineage>
</organism>
<gene>
    <name evidence="1" type="primary">rpmI</name>
    <name type="ordered locus">BamMC406_1401</name>
</gene>
<keyword id="KW-0687">Ribonucleoprotein</keyword>
<keyword id="KW-0689">Ribosomal protein</keyword>
<feature type="chain" id="PRO_1000127317" description="Large ribosomal subunit protein bL35">
    <location>
        <begin position="1"/>
        <end position="65"/>
    </location>
</feature>
<proteinExistence type="inferred from homology"/>
<sequence length="65" mass="7301">MPKMKTKKSAAKRFVVRPGGTVKRGQAFKRHILTKKTTKNKRHLRGATAVHDSDLNSVRAMLPFA</sequence>
<dbReference type="EMBL" id="CP001025">
    <property type="protein sequence ID" value="ACB63889.1"/>
    <property type="molecule type" value="Genomic_DNA"/>
</dbReference>
<dbReference type="RefSeq" id="WP_004191477.1">
    <property type="nucleotide sequence ID" value="NC_010551.1"/>
</dbReference>
<dbReference type="SMR" id="B1YP15"/>
<dbReference type="GeneID" id="98102115"/>
<dbReference type="KEGG" id="bac:BamMC406_1401"/>
<dbReference type="HOGENOM" id="CLU_169643_1_0_4"/>
<dbReference type="OrthoDB" id="47476at2"/>
<dbReference type="Proteomes" id="UP000001680">
    <property type="component" value="Chromosome 1"/>
</dbReference>
<dbReference type="GO" id="GO:0022625">
    <property type="term" value="C:cytosolic large ribosomal subunit"/>
    <property type="evidence" value="ECO:0007669"/>
    <property type="project" value="TreeGrafter"/>
</dbReference>
<dbReference type="GO" id="GO:0003735">
    <property type="term" value="F:structural constituent of ribosome"/>
    <property type="evidence" value="ECO:0007669"/>
    <property type="project" value="InterPro"/>
</dbReference>
<dbReference type="GO" id="GO:0006412">
    <property type="term" value="P:translation"/>
    <property type="evidence" value="ECO:0007669"/>
    <property type="project" value="UniProtKB-UniRule"/>
</dbReference>
<dbReference type="FunFam" id="4.10.410.60:FF:000001">
    <property type="entry name" value="50S ribosomal protein L35"/>
    <property type="match status" value="1"/>
</dbReference>
<dbReference type="Gene3D" id="4.10.410.60">
    <property type="match status" value="1"/>
</dbReference>
<dbReference type="HAMAP" id="MF_00514">
    <property type="entry name" value="Ribosomal_bL35"/>
    <property type="match status" value="1"/>
</dbReference>
<dbReference type="InterPro" id="IPR001706">
    <property type="entry name" value="Ribosomal_bL35"/>
</dbReference>
<dbReference type="InterPro" id="IPR021137">
    <property type="entry name" value="Ribosomal_bL35-like"/>
</dbReference>
<dbReference type="InterPro" id="IPR018265">
    <property type="entry name" value="Ribosomal_bL35_CS"/>
</dbReference>
<dbReference type="InterPro" id="IPR037229">
    <property type="entry name" value="Ribosomal_bL35_sf"/>
</dbReference>
<dbReference type="NCBIfam" id="TIGR00001">
    <property type="entry name" value="rpmI_bact"/>
    <property type="match status" value="1"/>
</dbReference>
<dbReference type="PANTHER" id="PTHR33343">
    <property type="entry name" value="54S RIBOSOMAL PROTEIN BL35M"/>
    <property type="match status" value="1"/>
</dbReference>
<dbReference type="PANTHER" id="PTHR33343:SF1">
    <property type="entry name" value="LARGE RIBOSOMAL SUBUNIT PROTEIN BL35M"/>
    <property type="match status" value="1"/>
</dbReference>
<dbReference type="Pfam" id="PF01632">
    <property type="entry name" value="Ribosomal_L35p"/>
    <property type="match status" value="1"/>
</dbReference>
<dbReference type="PRINTS" id="PR00064">
    <property type="entry name" value="RIBOSOMALL35"/>
</dbReference>
<dbReference type="SUPFAM" id="SSF143034">
    <property type="entry name" value="L35p-like"/>
    <property type="match status" value="1"/>
</dbReference>
<dbReference type="PROSITE" id="PS00936">
    <property type="entry name" value="RIBOSOMAL_L35"/>
    <property type="match status" value="1"/>
</dbReference>
<reference key="1">
    <citation type="submission" date="2008-04" db="EMBL/GenBank/DDBJ databases">
        <title>Complete sequence of chromosome 1 of Burkholderia ambifaria MC40-6.</title>
        <authorList>
            <person name="Copeland A."/>
            <person name="Lucas S."/>
            <person name="Lapidus A."/>
            <person name="Glavina del Rio T."/>
            <person name="Dalin E."/>
            <person name="Tice H."/>
            <person name="Pitluck S."/>
            <person name="Chain P."/>
            <person name="Malfatti S."/>
            <person name="Shin M."/>
            <person name="Vergez L."/>
            <person name="Lang D."/>
            <person name="Schmutz J."/>
            <person name="Larimer F."/>
            <person name="Land M."/>
            <person name="Hauser L."/>
            <person name="Kyrpides N."/>
            <person name="Lykidis A."/>
            <person name="Ramette A."/>
            <person name="Konstantinidis K."/>
            <person name="Tiedje J."/>
            <person name="Richardson P."/>
        </authorList>
    </citation>
    <scope>NUCLEOTIDE SEQUENCE [LARGE SCALE GENOMIC DNA]</scope>
    <source>
        <strain>MC40-6</strain>
    </source>
</reference>